<name>GRHL2_HUMAN</name>
<organism>
    <name type="scientific">Homo sapiens</name>
    <name type="common">Human</name>
    <dbReference type="NCBI Taxonomy" id="9606"/>
    <lineage>
        <taxon>Eukaryota</taxon>
        <taxon>Metazoa</taxon>
        <taxon>Chordata</taxon>
        <taxon>Craniata</taxon>
        <taxon>Vertebrata</taxon>
        <taxon>Euteleostomi</taxon>
        <taxon>Mammalia</taxon>
        <taxon>Eutheria</taxon>
        <taxon>Euarchontoglires</taxon>
        <taxon>Primates</taxon>
        <taxon>Haplorrhini</taxon>
        <taxon>Catarrhini</taxon>
        <taxon>Hominidae</taxon>
        <taxon>Homo</taxon>
    </lineage>
</organism>
<gene>
    <name type="primary">GRHL2</name>
    <name type="synonym">BOM</name>
    <name type="synonym">TFCP2L3</name>
</gene>
<evidence type="ECO:0000250" key="1">
    <source>
        <dbReference type="UniProtKB" id="Q8K5C0"/>
    </source>
</evidence>
<evidence type="ECO:0000255" key="2">
    <source>
        <dbReference type="PROSITE-ProRule" id="PRU01313"/>
    </source>
</evidence>
<evidence type="ECO:0000256" key="3">
    <source>
        <dbReference type="SAM" id="MobiDB-lite"/>
    </source>
</evidence>
<evidence type="ECO:0000269" key="4">
    <source>
    </source>
</evidence>
<evidence type="ECO:0000269" key="5">
    <source>
    </source>
</evidence>
<evidence type="ECO:0000269" key="6">
    <source>
    </source>
</evidence>
<evidence type="ECO:0000269" key="7">
    <source>
    </source>
</evidence>
<evidence type="ECO:0000269" key="8">
    <source>
    </source>
</evidence>
<evidence type="ECO:0000269" key="9">
    <source>
    </source>
</evidence>
<evidence type="ECO:0000269" key="10">
    <source>
    </source>
</evidence>
<evidence type="ECO:0000269" key="11">
    <source>
    </source>
</evidence>
<evidence type="ECO:0000269" key="12">
    <source>
    </source>
</evidence>
<evidence type="ECO:0000269" key="13">
    <source>
    </source>
</evidence>
<evidence type="ECO:0000303" key="14">
    <source>
    </source>
</evidence>
<evidence type="ECO:0000305" key="15"/>
<evidence type="ECO:0000305" key="16">
    <source>
    </source>
</evidence>
<evidence type="ECO:0007829" key="17">
    <source>
        <dbReference type="PDB" id="5MR7"/>
    </source>
</evidence>
<reference key="1">
    <citation type="journal article" date="2004" name="Nat. Genet.">
        <title>Complete sequencing and characterization of 21,243 full-length human cDNAs.</title>
        <authorList>
            <person name="Ota T."/>
            <person name="Suzuki Y."/>
            <person name="Nishikawa T."/>
            <person name="Otsuki T."/>
            <person name="Sugiyama T."/>
            <person name="Irie R."/>
            <person name="Wakamatsu A."/>
            <person name="Hayashi K."/>
            <person name="Sato H."/>
            <person name="Nagai K."/>
            <person name="Kimura K."/>
            <person name="Makita H."/>
            <person name="Sekine M."/>
            <person name="Obayashi M."/>
            <person name="Nishi T."/>
            <person name="Shibahara T."/>
            <person name="Tanaka T."/>
            <person name="Ishii S."/>
            <person name="Yamamoto J."/>
            <person name="Saito K."/>
            <person name="Kawai Y."/>
            <person name="Isono Y."/>
            <person name="Nakamura Y."/>
            <person name="Nagahari K."/>
            <person name="Murakami K."/>
            <person name="Yasuda T."/>
            <person name="Iwayanagi T."/>
            <person name="Wagatsuma M."/>
            <person name="Shiratori A."/>
            <person name="Sudo H."/>
            <person name="Hosoiri T."/>
            <person name="Kaku Y."/>
            <person name="Kodaira H."/>
            <person name="Kondo H."/>
            <person name="Sugawara M."/>
            <person name="Takahashi M."/>
            <person name="Kanda K."/>
            <person name="Yokoi T."/>
            <person name="Furuya T."/>
            <person name="Kikkawa E."/>
            <person name="Omura Y."/>
            <person name="Abe K."/>
            <person name="Kamihara K."/>
            <person name="Katsuta N."/>
            <person name="Sato K."/>
            <person name="Tanikawa M."/>
            <person name="Yamazaki M."/>
            <person name="Ninomiya K."/>
            <person name="Ishibashi T."/>
            <person name="Yamashita H."/>
            <person name="Murakawa K."/>
            <person name="Fujimori K."/>
            <person name="Tanai H."/>
            <person name="Kimata M."/>
            <person name="Watanabe M."/>
            <person name="Hiraoka S."/>
            <person name="Chiba Y."/>
            <person name="Ishida S."/>
            <person name="Ono Y."/>
            <person name="Takiguchi S."/>
            <person name="Watanabe S."/>
            <person name="Yosida M."/>
            <person name="Hotuta T."/>
            <person name="Kusano J."/>
            <person name="Kanehori K."/>
            <person name="Takahashi-Fujii A."/>
            <person name="Hara H."/>
            <person name="Tanase T.-O."/>
            <person name="Nomura Y."/>
            <person name="Togiya S."/>
            <person name="Komai F."/>
            <person name="Hara R."/>
            <person name="Takeuchi K."/>
            <person name="Arita M."/>
            <person name="Imose N."/>
            <person name="Musashino K."/>
            <person name="Yuuki H."/>
            <person name="Oshima A."/>
            <person name="Sasaki N."/>
            <person name="Aotsuka S."/>
            <person name="Yoshikawa Y."/>
            <person name="Matsunawa H."/>
            <person name="Ichihara T."/>
            <person name="Shiohata N."/>
            <person name="Sano S."/>
            <person name="Moriya S."/>
            <person name="Momiyama H."/>
            <person name="Satoh N."/>
            <person name="Takami S."/>
            <person name="Terashima Y."/>
            <person name="Suzuki O."/>
            <person name="Nakagawa S."/>
            <person name="Senoh A."/>
            <person name="Mizoguchi H."/>
            <person name="Goto Y."/>
            <person name="Shimizu F."/>
            <person name="Wakebe H."/>
            <person name="Hishigaki H."/>
            <person name="Watanabe T."/>
            <person name="Sugiyama A."/>
            <person name="Takemoto M."/>
            <person name="Kawakami B."/>
            <person name="Yamazaki M."/>
            <person name="Watanabe K."/>
            <person name="Kumagai A."/>
            <person name="Itakura S."/>
            <person name="Fukuzumi Y."/>
            <person name="Fujimori Y."/>
            <person name="Komiyama M."/>
            <person name="Tashiro H."/>
            <person name="Tanigami A."/>
            <person name="Fujiwara T."/>
            <person name="Ono T."/>
            <person name="Yamada K."/>
            <person name="Fujii Y."/>
            <person name="Ozaki K."/>
            <person name="Hirao M."/>
            <person name="Ohmori Y."/>
            <person name="Kawabata A."/>
            <person name="Hikiji T."/>
            <person name="Kobatake N."/>
            <person name="Inagaki H."/>
            <person name="Ikema Y."/>
            <person name="Okamoto S."/>
            <person name="Okitani R."/>
            <person name="Kawakami T."/>
            <person name="Noguchi S."/>
            <person name="Itoh T."/>
            <person name="Shigeta K."/>
            <person name="Senba T."/>
            <person name="Matsumura K."/>
            <person name="Nakajima Y."/>
            <person name="Mizuno T."/>
            <person name="Morinaga M."/>
            <person name="Sasaki M."/>
            <person name="Togashi T."/>
            <person name="Oyama M."/>
            <person name="Hata H."/>
            <person name="Watanabe M."/>
            <person name="Komatsu T."/>
            <person name="Mizushima-Sugano J."/>
            <person name="Satoh T."/>
            <person name="Shirai Y."/>
            <person name="Takahashi Y."/>
            <person name="Nakagawa K."/>
            <person name="Okumura K."/>
            <person name="Nagase T."/>
            <person name="Nomura N."/>
            <person name="Kikuchi H."/>
            <person name="Masuho Y."/>
            <person name="Yamashita R."/>
            <person name="Nakai K."/>
            <person name="Yada T."/>
            <person name="Nakamura Y."/>
            <person name="Ohara O."/>
            <person name="Isogai T."/>
            <person name="Sugano S."/>
        </authorList>
    </citation>
    <scope>NUCLEOTIDE SEQUENCE [LARGE SCALE MRNA] (ISOFORM 1)</scope>
    <source>
        <tissue>Placenta</tissue>
    </source>
</reference>
<reference key="2">
    <citation type="submission" date="2005-07" db="EMBL/GenBank/DDBJ databases">
        <authorList>
            <person name="Mural R.J."/>
            <person name="Istrail S."/>
            <person name="Sutton G.G."/>
            <person name="Florea L."/>
            <person name="Halpern A.L."/>
            <person name="Mobarry C.M."/>
            <person name="Lippert R."/>
            <person name="Walenz B."/>
            <person name="Shatkay H."/>
            <person name="Dew I."/>
            <person name="Miller J.R."/>
            <person name="Flanigan M.J."/>
            <person name="Edwards N.J."/>
            <person name="Bolanos R."/>
            <person name="Fasulo D."/>
            <person name="Halldorsson B.V."/>
            <person name="Hannenhalli S."/>
            <person name="Turner R."/>
            <person name="Yooseph S."/>
            <person name="Lu F."/>
            <person name="Nusskern D.R."/>
            <person name="Shue B.C."/>
            <person name="Zheng X.H."/>
            <person name="Zhong F."/>
            <person name="Delcher A.L."/>
            <person name="Huson D.H."/>
            <person name="Kravitz S.A."/>
            <person name="Mouchard L."/>
            <person name="Reinert K."/>
            <person name="Remington K.A."/>
            <person name="Clark A.G."/>
            <person name="Waterman M.S."/>
            <person name="Eichler E.E."/>
            <person name="Adams M.D."/>
            <person name="Hunkapiller M.W."/>
            <person name="Myers E.W."/>
            <person name="Venter J.C."/>
        </authorList>
    </citation>
    <scope>NUCLEOTIDE SEQUENCE [LARGE SCALE GENOMIC DNA]</scope>
</reference>
<reference key="3">
    <citation type="journal article" date="2004" name="Genome Res.">
        <title>The status, quality, and expansion of the NIH full-length cDNA project: the Mammalian Gene Collection (MGC).</title>
        <authorList>
            <consortium name="The MGC Project Team"/>
        </authorList>
    </citation>
    <scope>NUCLEOTIDE SEQUENCE [LARGE SCALE MRNA] (ISOFORMS 1 AND 2)</scope>
</reference>
<reference key="4">
    <citation type="journal article" date="2002" name="Hum. Mol. Genet.">
        <title>Mutation of a transcription factor, TFCP2L3, causes progressive autosomal dominant hearing loss, DFNA28.</title>
        <authorList>
            <person name="Peters L.M."/>
            <person name="Anderson D.W."/>
            <person name="Griffith A.J."/>
            <person name="Grundfast K.M."/>
            <person name="San Agustin T.B."/>
            <person name="Madeo A.C."/>
            <person name="Friedman T.B."/>
            <person name="Morell R.J."/>
        </authorList>
    </citation>
    <scope>INVOLVEMENT IN DFNA28</scope>
    <scope>TISSUE SPECIFICITY</scope>
</reference>
<reference key="5">
    <citation type="journal article" date="2002" name="Mech. Dev.">
        <title>A highly conserved novel family of mammalian developmental transcription factors related to Drosophila grainyhead.</title>
        <authorList>
            <person name="Wilanowski T."/>
            <person name="Tuckfield A."/>
            <person name="Cerruti L."/>
            <person name="O'Connell S."/>
            <person name="Saint R."/>
            <person name="Parekh V."/>
            <person name="Tao J."/>
            <person name="Cunningham J.M."/>
            <person name="Jane S.M."/>
        </authorList>
    </citation>
    <scope>FUNCTION</scope>
    <scope>TISSUE SPECIFICITY</scope>
    <scope>INTERACTION WITH GRHL1</scope>
</reference>
<reference key="6">
    <citation type="journal article" date="2003" name="Biochem. J.">
        <title>The identification and characterization of human sister-of-mammalian grainyhead (SOM) expands the grainyhead-like family of developmental transcription factors.</title>
        <authorList>
            <person name="Ting S.B."/>
            <person name="Wilanowski T."/>
            <person name="Cerruti L."/>
            <person name="Zhao L.L."/>
            <person name="Cunningham J.M."/>
            <person name="Jane S.M."/>
        </authorList>
    </citation>
    <scope>INTERACTION WITH GRHL3</scope>
</reference>
<reference key="7">
    <citation type="journal article" date="2009" name="Oncogene">
        <title>Regulation of the hTERT promoter activity by MSH2, the hnRNPs K and D, and GRHL2 in human oral squamous cell carcinoma cells.</title>
        <authorList>
            <person name="Kang X."/>
            <person name="Chen W."/>
            <person name="Kim R.H."/>
            <person name="Kang M.K."/>
            <person name="Park N.H."/>
        </authorList>
    </citation>
    <scope>FUNCTION</scope>
    <scope>DNA-BINDING</scope>
</reference>
<reference key="8">
    <citation type="journal article" date="2010" name="Development">
        <title>The transcription factor grainyhead-like 2 regulates the molecular composition of the epithelial apical junctional complex.</title>
        <authorList>
            <person name="Werth M."/>
            <person name="Walentin K."/>
            <person name="Aue A."/>
            <person name="Schonheit J."/>
            <person name="Wuebken A."/>
            <person name="Pode-Shakked N."/>
            <person name="Vilianovitch L."/>
            <person name="Erdmann B."/>
            <person name="Dekel B."/>
            <person name="Bader M."/>
            <person name="Barasch J."/>
            <person name="Rosenbauer F."/>
            <person name="Luft F.C."/>
            <person name="Schmidt-Ott K.M."/>
        </authorList>
    </citation>
    <scope>FUNCTION</scope>
    <scope>TISSUE SPECIFICITY</scope>
</reference>
<reference key="9">
    <citation type="journal article" date="2010" name="J. Biol. Chem.">
        <title>Grainyhead-like 2 enhances the human telomerase reverse transcriptase gene expression by inhibiting DNA methylation at the 5'-CpG island in normal human keratinocytes.</title>
        <authorList>
            <person name="Chen W."/>
            <person name="Dong Q."/>
            <person name="Shin K.H."/>
            <person name="Kim R.H."/>
            <person name="Oh J.E."/>
            <person name="Park N.H."/>
            <person name="Kang M.K."/>
        </authorList>
    </citation>
    <scope>FUNCTION</scope>
    <scope>SUBCELLULAR LOCATION</scope>
    <scope>INDUCTION BY SENESCENCE</scope>
</reference>
<reference key="10">
    <citation type="journal article" date="2012" name="Cell Death Dis.">
        <title>Grainyhead-like 2 (GRHL2) inhibits keratinocyte differentiation through epigenetic mechanism.</title>
        <authorList>
            <person name="Chen W."/>
            <person name="Xiao Liu Z."/>
            <person name="Oh J.E."/>
            <person name="Shin K.H."/>
            <person name="Kim R.H."/>
            <person name="Jiang M."/>
            <person name="Park N.H."/>
            <person name="Kang M.K."/>
        </authorList>
    </citation>
    <scope>FUNCTION</scope>
    <scope>INDUCTION BY CALCIUM</scope>
</reference>
<reference key="11">
    <citation type="journal article" date="2018" name="Nucleic Acids Res.">
        <title>Structural basis of gene regulation by the Grainyhead/CP2 transcription factor family.</title>
        <authorList>
            <person name="Ming Q."/>
            <person name="Roske Y."/>
            <person name="Schuetz A."/>
            <person name="Walentin K."/>
            <person name="Ibraimi I."/>
            <person name="Schmidt-Ott K.M."/>
            <person name="Heinemann U."/>
        </authorList>
    </citation>
    <scope>X-RAY CRYSTALLOGRAPHY (2.50 ANGSTROMS) OF 217-492</scope>
    <scope>FUNCTION</scope>
    <scope>MUTAGENESIS OF ARG-423</scope>
</reference>
<reference key="12">
    <citation type="journal article" date="2014" name="Am. J. Hum. Genet.">
        <title>Mutations in GRHL2 result in an autosomal-recessive ectodermal Dysplasia syndrome.</title>
        <authorList>
            <person name="Petrof G."/>
            <person name="Nanda A."/>
            <person name="Howden J."/>
            <person name="Takeichi T."/>
            <person name="McMillan J.R."/>
            <person name="Aristodemou S."/>
            <person name="Ozoemena L."/>
            <person name="Liu L."/>
            <person name="South A.P."/>
            <person name="Pourreyron C."/>
            <person name="Dafou D."/>
            <person name="Proudfoot L.E."/>
            <person name="Al-Ajmi H."/>
            <person name="Akiyama M."/>
            <person name="McLean W.H."/>
            <person name="Simpson M.A."/>
            <person name="Parsons M."/>
            <person name="McGrath J.A."/>
        </authorList>
    </citation>
    <scope>INVOLVEMENT IN ECTDS</scope>
    <scope>VARIANTS ECTDS HIS-398 AND LYS-482</scope>
    <scope>CHARACTERIZATION OF VARIANT ECTDS LYS-482</scope>
    <scope>FUNCTION</scope>
    <scope>SUBCELLULAR LOCATION</scope>
    <scope>TISSUE SPECIFICITY</scope>
</reference>
<reference key="13">
    <citation type="journal article" date="2018" name="Am. J. Hum. Genet.">
        <title>Ectopic GRHL2 expression due to non-coding mutations promotes cell state transition and causes posterior polymorphous corneal dystrophy 4.</title>
        <authorList>
            <person name="Liskova P."/>
            <person name="Dudakova L."/>
            <person name="Evans C.J."/>
            <person name="Rojas Lopez K.E."/>
            <person name="Pontikos N."/>
            <person name="Athanasiou D."/>
            <person name="Jama H."/>
            <person name="Sach J."/>
            <person name="Skalicka P."/>
            <person name="Stranecky V."/>
            <person name="Kmoch S."/>
            <person name="Thaung C."/>
            <person name="Filipec M."/>
            <person name="Cheetham M.E."/>
            <person name="Davidson A.E."/>
            <person name="Tuft S.J."/>
            <person name="Hardcastle A.J."/>
        </authorList>
    </citation>
    <scope>INVOLVEMENT IN PPCD4</scope>
    <scope>TISSUE SPECIFICITY</scope>
    <scope>SUBCELLULAR LOCATION</scope>
</reference>
<comment type="function">
    <text evidence="1 7 8 9 10 11 12 16">Transcription factor playing an important role in primary neurulation and in epithelial development (PubMed:25152456, PubMed:29309642). Binds directly to the consensus DNA sequence 5'-AACCGGTT-3' acting as an activator and repressor on distinct target genes (By similarity). During embryogenesis, plays unique and cooperative roles with GRHL3 in establishing distinct zones of primary neurulation. Essential for closure 3 (rostral end of the forebrain), functions cooperatively with GRHL3 in closure 2 (forebrain/midbrain boundary) and posterior neuropore closure (By similarity). Regulates epithelial morphogenesis acting as a target gene-associated transcriptional activator of apical junctional complex components. Up-regulates of CLDN3 and CLDN4, as well as of RAB25, which increases the CLDN4 protein and its localization at tight junctions (By similarity). Comprises an essential component of the transcriptional machinery that establishes appropriate expression levels of CLDN4 and CDH1 in different types of epithelia. Exhibits functional redundancy with GRHL3 in epidermal morphogenetic events and epidermal wound repair (By similarity). In lung, forms a regulatory loop with NKX2-1 that coordinates lung epithelial cell morphogenesis and differentiation (By similarity). In keratinocytes, plays a role in telomerase activation during cellular proliferation, regulates TERT expression by binding to TERT promoter region and inhibiting DNA methylation at the 5'-CpG island, possibly by interfering with DNMT1 enzyme activity (PubMed:19015635, PubMed:20938050). In addition, impairs keratinocyte differentiation and epidermal function by inhibiting the expression of genes clustered at the epidermal differentiation complex (EDC) as well as GRHL1 and GRHL3 through epigenetic mechanisms (PubMed:23254293).</text>
</comment>
<comment type="subunit">
    <text evidence="4 6">Homodimer, also forms heterodimers with GRHL1 or GRHL3.</text>
</comment>
<comment type="interaction">
    <interactant intactId="EBI-10219092">
        <id>Q6ISB3</id>
    </interactant>
    <interactant intactId="EBI-11109373">
        <id>Q9NZI5</id>
        <label>GRHL1</label>
    </interactant>
    <organismsDiffer>false</organismsDiffer>
    <experiments>7</experiments>
</comment>
<comment type="interaction">
    <interactant intactId="EBI-10219092">
        <id>Q6ISB3</id>
    </interactant>
    <interactant intactId="EBI-10219092">
        <id>Q6ISB3</id>
        <label>GRHL2</label>
    </interactant>
    <organismsDiffer>false</organismsDiffer>
    <experiments>2</experiments>
</comment>
<comment type="interaction">
    <interactant intactId="EBI-10219092">
        <id>Q6ISB3</id>
    </interactant>
    <interactant intactId="EBI-2798728">
        <id>P61968</id>
        <label>LMO4</label>
    </interactant>
    <organismsDiffer>false</organismsDiffer>
    <experiments>7</experiments>
</comment>
<comment type="interaction">
    <interactant intactId="EBI-10219092">
        <id>Q6ISB3</id>
    </interactant>
    <interactant intactId="EBI-296331">
        <id>Q02548</id>
        <label>PAX5</label>
    </interactant>
    <organismsDiffer>false</organismsDiffer>
    <experiments>3</experiments>
</comment>
<comment type="interaction">
    <interactant intactId="EBI-10219092">
        <id>Q6ISB3</id>
    </interactant>
    <interactant intactId="EBI-747278">
        <id>P26367</id>
        <label>PAX6</label>
    </interactant>
    <organismsDiffer>false</organismsDiffer>
    <experiments>3</experiments>
</comment>
<comment type="interaction">
    <interactant intactId="EBI-10219092">
        <id>Q6ISB3</id>
    </interactant>
    <interactant intactId="EBI-348567">
        <id>O75928-2</id>
        <label>PIAS2</label>
    </interactant>
    <organismsDiffer>false</organismsDiffer>
    <experiments>3</experiments>
</comment>
<comment type="subcellular location">
    <subcellularLocation>
        <location evidence="8 11 13">Nucleus</location>
    </subcellularLocation>
    <subcellularLocation>
        <location evidence="11">Membrane</location>
    </subcellularLocation>
    <text evidence="11">detected at cell-cell contact areas.</text>
</comment>
<comment type="alternative products">
    <event type="alternative splicing"/>
    <isoform>
        <id>Q6ISB3-1</id>
        <name>1</name>
        <sequence type="displayed"/>
    </isoform>
    <isoform>
        <id>Q6ISB3-2</id>
        <name>2</name>
        <sequence type="described" ref="VSP_017642"/>
    </isoform>
</comment>
<comment type="tissue specificity">
    <text evidence="4 5 9 11 13">Expressed in keratinocytes (at protein level). Highly expressed in placenta, prostate, brain and kidney. Lower-level expression in a variety of epithelial tissues such as thymus, lung, salivary gland, mammary gland and digestive tract. Expressed in the cochlear. Expressed in corneal epithelial cells, but not in the endothelium or stroma (PubMed:29499165).</text>
</comment>
<comment type="induction">
    <text evidence="8 10">Expressed in proliferating cells, the expression decreases during senescence. In keratinocytes, expression levels decrease upon calcium exposure.</text>
</comment>
<comment type="disease" evidence="5">
    <disease id="DI-00849">
        <name>Deafness, autosomal dominant, 28</name>
        <acronym>DFNA28</acronym>
        <description>A form of non-syndromic sensorineural hearing loss. Sensorineural deafness results from damage to the neural receptors of the inner ear, the nerve pathways to the brain, or the area of the brain that receives sound information. DFNA28 is characterized by mild to moderate hearing loss across most frequencies that progresses to severe loss in the higher frequencies by the fifth decade.</description>
        <dbReference type="MIM" id="608641"/>
    </disease>
    <text>The disease is caused by variants affecting the gene represented in this entry.</text>
</comment>
<comment type="disease" evidence="11">
    <disease id="DI-04239">
        <name>Ectodermal dysplasia/short stature syndrome</name>
        <acronym>ECTDS</acronym>
        <description>An autosomal recessive ectodermal dysplasia syndrome characterized by nail dystrophy and/or loss, oral mucosa and/or tongue pigmentation, abnormal dentition, keratoderma affecting the margins of the palms and soles, focal hyperkeratosis of the dorsal aspects of the hands and feet, and short stature.</description>
        <dbReference type="MIM" id="616029"/>
    </disease>
    <text>The disease is caused by variants affecting the gene represented in this entry.</text>
</comment>
<comment type="disease" evidence="13">
    <disease id="DI-05267">
        <name>Corneal dystrophy, posterior polymorphous, 4</name>
        <acronym>PPCD4</acronym>
        <description>A subtype of posterior corneal dystrophy, a disease characterized by alterations of Descemet membrane presenting as vesicles, opacities or band-like lesions on slit-lamp examination and specular microscopy. In severe cases, corneal endothelial failure may occur and corneal transplantation is required to restore vision. Secondary complications are common and include corneal edema, glaucoma, iris adherence to the cornea, and corectopia. PPCD4 transmission pattern is consistent with autosomal dominant inheritance.</description>
        <dbReference type="MIM" id="618031"/>
    </disease>
    <text>The disease is caused by variants affecting the gene represented in this entry.</text>
</comment>
<comment type="miscellaneous">
    <text evidence="1">GRHL genes (GRHL1, GRHL2 and GRHL3) show a paradoxal lack of redundancy despite their extensive sequence identity in the DNA-binding and protein dimerization domains and the fact that the core consensus DNA binding sites are identical. They have related but remarkably different functions during embryogenesis because of their differential spatiotemporal expression patterns during development.</text>
</comment>
<comment type="similarity">
    <text evidence="15">Belongs to the grh/CP2 family. Grainyhead subfamily.</text>
</comment>
<keyword id="KW-0002">3D-structure</keyword>
<keyword id="KW-0010">Activator</keyword>
<keyword id="KW-0025">Alternative splicing</keyword>
<keyword id="KW-1212">Corneal dystrophy</keyword>
<keyword id="KW-0209">Deafness</keyword>
<keyword id="KW-0225">Disease variant</keyword>
<keyword id="KW-0238">DNA-binding</keyword>
<keyword id="KW-0242">Dwarfism</keyword>
<keyword id="KW-0038">Ectodermal dysplasia</keyword>
<keyword id="KW-0472">Membrane</keyword>
<keyword id="KW-1010">Non-syndromic deafness</keyword>
<keyword id="KW-0539">Nucleus</keyword>
<keyword id="KW-1267">Proteomics identification</keyword>
<keyword id="KW-1185">Reference proteome</keyword>
<keyword id="KW-0804">Transcription</keyword>
<keyword id="KW-0805">Transcription regulation</keyword>
<protein>
    <recommendedName>
        <fullName>Grainyhead-like protein 2 homolog</fullName>
    </recommendedName>
    <alternativeName>
        <fullName>Brother of mammalian grainyhead</fullName>
    </alternativeName>
    <alternativeName>
        <fullName>Transcription factor CP2-like 3</fullName>
    </alternativeName>
</protein>
<feature type="chain" id="PRO_0000227994" description="Grainyhead-like protein 2 homolog">
    <location>
        <begin position="1"/>
        <end position="625"/>
    </location>
</feature>
<feature type="domain" description="Grh/CP2 DB" evidence="2">
    <location>
        <begin position="244"/>
        <end position="482"/>
    </location>
</feature>
<feature type="region of interest" description="Transcription activation" evidence="1">
    <location>
        <begin position="1"/>
        <end position="93"/>
    </location>
</feature>
<feature type="region of interest" description="Disordered" evidence="3">
    <location>
        <begin position="1"/>
        <end position="24"/>
    </location>
</feature>
<feature type="region of interest" description="Disordered" evidence="3">
    <location>
        <begin position="82"/>
        <end position="112"/>
    </location>
</feature>
<feature type="region of interest" description="Disordered" evidence="3">
    <location>
        <begin position="428"/>
        <end position="453"/>
    </location>
</feature>
<feature type="compositionally biased region" description="Polar residues" evidence="3">
    <location>
        <begin position="98"/>
        <end position="109"/>
    </location>
</feature>
<feature type="compositionally biased region" description="Polar residues" evidence="3">
    <location>
        <begin position="440"/>
        <end position="451"/>
    </location>
</feature>
<feature type="site" description="Important for activation of transcription" evidence="12">
    <location>
        <position position="423"/>
    </location>
</feature>
<feature type="splice variant" id="VSP_017642" description="In isoform 2." evidence="14">
    <location>
        <begin position="1"/>
        <end position="16"/>
    </location>
</feature>
<feature type="sequence variant" id="VAR_071989" description="In ECTDS; dbSNP:rs587777737." evidence="11">
    <original>Y</original>
    <variation>H</variation>
    <location>
        <position position="398"/>
    </location>
</feature>
<feature type="sequence variant" id="VAR_049293" description="In dbSNP:rs3779617.">
    <original>V</original>
    <variation>I</variation>
    <location>
        <position position="415"/>
    </location>
</feature>
<feature type="sequence variant" id="VAR_071990" description="In ECTDS; reduced expression; altered cell morphology; impaired tight junctions; adhesion defects; cytoplasmic translocation; dbSNP:rs587777738." evidence="11">
    <original>I</original>
    <variation>K</variation>
    <location>
        <position position="482"/>
    </location>
</feature>
<feature type="mutagenesis site" description="Loss of activity as transcriptional activator." evidence="12">
    <original>R</original>
    <variation>A</variation>
    <variation>Q</variation>
    <location>
        <position position="423"/>
    </location>
</feature>
<feature type="sequence conflict" description="In Ref. 1; BAB14699." evidence="15" ref="1">
    <original>S</original>
    <variation>I</variation>
    <location>
        <position position="53"/>
    </location>
</feature>
<feature type="sequence conflict" description="In Ref. 1; BAB14699." evidence="15" ref="1">
    <original>R</original>
    <variation>Q</variation>
    <location>
        <position position="430"/>
    </location>
</feature>
<feature type="sequence conflict" description="In Ref. 1; BAB14699." evidence="15" ref="1">
    <original>K</original>
    <variation>N</variation>
    <location>
        <position position="436"/>
    </location>
</feature>
<feature type="sequence conflict" description="In Ref. 1; BAB14699." evidence="15" ref="1">
    <original>K</original>
    <variation>M</variation>
    <location>
        <position position="561"/>
    </location>
</feature>
<feature type="strand" evidence="17">
    <location>
        <begin position="248"/>
        <end position="254"/>
    </location>
</feature>
<feature type="strand" evidence="17">
    <location>
        <begin position="267"/>
        <end position="271"/>
    </location>
</feature>
<feature type="strand" evidence="17">
    <location>
        <begin position="276"/>
        <end position="282"/>
    </location>
</feature>
<feature type="strand" evidence="17">
    <location>
        <begin position="295"/>
        <end position="306"/>
    </location>
</feature>
<feature type="helix" evidence="17">
    <location>
        <begin position="310"/>
        <end position="322"/>
    </location>
</feature>
<feature type="strand" evidence="17">
    <location>
        <begin position="331"/>
        <end position="334"/>
    </location>
</feature>
<feature type="helix" evidence="17">
    <location>
        <begin position="338"/>
        <end position="341"/>
    </location>
</feature>
<feature type="strand" evidence="17">
    <location>
        <begin position="344"/>
        <end position="351"/>
    </location>
</feature>
<feature type="strand" evidence="17">
    <location>
        <begin position="354"/>
        <end position="360"/>
    </location>
</feature>
<feature type="strand" evidence="17">
    <location>
        <begin position="365"/>
        <end position="371"/>
    </location>
</feature>
<feature type="turn" evidence="17">
    <location>
        <begin position="375"/>
        <end position="378"/>
    </location>
</feature>
<feature type="strand" evidence="17">
    <location>
        <begin position="389"/>
        <end position="400"/>
    </location>
</feature>
<feature type="strand" evidence="17">
    <location>
        <begin position="406"/>
        <end position="417"/>
    </location>
</feature>
<feature type="helix" evidence="17">
    <location>
        <begin position="420"/>
        <end position="429"/>
    </location>
</feature>
<feature type="strand" evidence="17">
    <location>
        <begin position="465"/>
        <end position="467"/>
    </location>
</feature>
<feature type="strand" evidence="17">
    <location>
        <begin position="474"/>
        <end position="476"/>
    </location>
</feature>
<proteinExistence type="evidence at protein level"/>
<accession>Q6ISB3</accession>
<accession>A1L303</accession>
<accession>Q6NT03</accession>
<accession>Q9H8B8</accession>
<sequence length="625" mass="71105">MSQESDNNKRLVALVPMPSDPPFNTRRAYTSEDEAWKSYLENPLTAATKAMMSINGDEDSAAALGLLYDYYKVPRDKRLLSVSKASDSQEDQEKRNCLGTSEAQSNLSGGENRVQVLKTVPVNLSLNQDHLENSKREQYSISFPESSAIIPVSGITVVKAEDFTPVFMAPPVHYPRGDGEEQRVVIFEQTQYDVPSLATHSAYLKDDQRSTPDSTYSESFKDAATEKFRSASVGAEEYMYDQTSSGTFQYTLEATKSLRQKQGEGPMTYLNKGQFYAITLSETGDNKCFRHPISKVRSVVMVVFSEDKNRDEQLKYWKYWHSRQHTAKQRVLDIADYKESFNTIGNIEEIAYNAVSFTWDVNEEAKIFITVNCLSTDFSSQKGVKGLPLMIQIDTYSYNNRSNKPIHRAYCQIKVFCDKGAERKIRDEERKQNRKKGKGQASQTQCNSSSDGKLAAIPLQKKSDITYFKTMPDLHSQPVLFIPDVHFANLQRTGQVYYNTDDEREGGSVLVKRMFRPMEEEFGPVPSKQMKEEGTKRVLLYVRKETDDVFDALMLKSPTVKGLMEAISEKYGLPVEKIAKLYKKSKKGILVNMDDNIIEHYSNEDTFILNMESMVEGFKVTLMEI</sequence>
<dbReference type="EMBL" id="AK023844">
    <property type="protein sequence ID" value="BAB14699.1"/>
    <property type="molecule type" value="mRNA"/>
</dbReference>
<dbReference type="EMBL" id="CH471060">
    <property type="protein sequence ID" value="EAW91834.1"/>
    <property type="molecule type" value="Genomic_DNA"/>
</dbReference>
<dbReference type="EMBL" id="BC069618">
    <property type="protein sequence ID" value="AAH69618.1"/>
    <property type="molecule type" value="mRNA"/>
</dbReference>
<dbReference type="EMBL" id="BC069633">
    <property type="protein sequence ID" value="AAH69633.1"/>
    <property type="molecule type" value="mRNA"/>
</dbReference>
<dbReference type="EMBL" id="BC069638">
    <property type="protein sequence ID" value="AAH69638.1"/>
    <property type="molecule type" value="mRNA"/>
</dbReference>
<dbReference type="EMBL" id="BC129822">
    <property type="protein sequence ID" value="AAI29823.1"/>
    <property type="molecule type" value="mRNA"/>
</dbReference>
<dbReference type="EMBL" id="BC129823">
    <property type="protein sequence ID" value="AAI29824.1"/>
    <property type="molecule type" value="mRNA"/>
</dbReference>
<dbReference type="CCDS" id="CCDS34931.1">
    <molecule id="Q6ISB3-1"/>
</dbReference>
<dbReference type="CCDS" id="CCDS83312.1">
    <molecule id="Q6ISB3-2"/>
</dbReference>
<dbReference type="RefSeq" id="NP_001317522.1">
    <molecule id="Q6ISB3-2"/>
    <property type="nucleotide sequence ID" value="NM_001330593.2"/>
</dbReference>
<dbReference type="RefSeq" id="NP_079191.2">
    <molecule id="Q6ISB3-1"/>
    <property type="nucleotide sequence ID" value="NM_024915.4"/>
</dbReference>
<dbReference type="RefSeq" id="XP_011515608.1">
    <molecule id="Q6ISB3-2"/>
    <property type="nucleotide sequence ID" value="XM_011517306.4"/>
</dbReference>
<dbReference type="RefSeq" id="XP_054217260.1">
    <molecule id="Q6ISB3-2"/>
    <property type="nucleotide sequence ID" value="XM_054361285.1"/>
</dbReference>
<dbReference type="PDB" id="5MR7">
    <property type="method" value="X-ray"/>
    <property type="resolution" value="2.50 A"/>
    <property type="chains" value="A/B=217-492"/>
</dbReference>
<dbReference type="PDBsum" id="5MR7"/>
<dbReference type="SMR" id="Q6ISB3"/>
<dbReference type="BioGRID" id="123042">
    <property type="interactions" value="24"/>
</dbReference>
<dbReference type="FunCoup" id="Q6ISB3">
    <property type="interactions" value="1150"/>
</dbReference>
<dbReference type="IntAct" id="Q6ISB3">
    <property type="interactions" value="9"/>
</dbReference>
<dbReference type="MINT" id="Q6ISB3"/>
<dbReference type="STRING" id="9606.ENSP00000495564"/>
<dbReference type="GlyGen" id="Q6ISB3">
    <property type="glycosylation" value="4 sites, 1 O-linked glycan (4 sites)"/>
</dbReference>
<dbReference type="iPTMnet" id="Q6ISB3"/>
<dbReference type="PhosphoSitePlus" id="Q6ISB3"/>
<dbReference type="BioMuta" id="GRHL2"/>
<dbReference type="DMDM" id="74736618"/>
<dbReference type="jPOST" id="Q6ISB3"/>
<dbReference type="MassIVE" id="Q6ISB3"/>
<dbReference type="PaxDb" id="9606-ENSP00000251808"/>
<dbReference type="PeptideAtlas" id="Q6ISB3"/>
<dbReference type="ProteomicsDB" id="66492">
    <molecule id="Q6ISB3-1"/>
</dbReference>
<dbReference type="ProteomicsDB" id="66493">
    <molecule id="Q6ISB3-2"/>
</dbReference>
<dbReference type="Pumba" id="Q6ISB3"/>
<dbReference type="Antibodypedia" id="1306">
    <property type="antibodies" value="154 antibodies from 22 providers"/>
</dbReference>
<dbReference type="DNASU" id="79977"/>
<dbReference type="Ensembl" id="ENST00000395927.1">
    <molecule id="Q6ISB3-2"/>
    <property type="protein sequence ID" value="ENSP00000379260.1"/>
    <property type="gene ID" value="ENSG00000083307.12"/>
</dbReference>
<dbReference type="Ensembl" id="ENST00000646743.1">
    <molecule id="Q6ISB3-1"/>
    <property type="protein sequence ID" value="ENSP00000495564.1"/>
    <property type="gene ID" value="ENSG00000083307.12"/>
</dbReference>
<dbReference type="GeneID" id="79977"/>
<dbReference type="KEGG" id="hsa:79977"/>
<dbReference type="MANE-Select" id="ENST00000646743.1">
    <property type="protein sequence ID" value="ENSP00000495564.1"/>
    <property type="RefSeq nucleotide sequence ID" value="NM_024915.4"/>
    <property type="RefSeq protein sequence ID" value="NP_079191.2"/>
</dbReference>
<dbReference type="UCSC" id="uc010mbu.4">
    <molecule id="Q6ISB3-1"/>
    <property type="organism name" value="human"/>
</dbReference>
<dbReference type="AGR" id="HGNC:2799"/>
<dbReference type="CTD" id="79977"/>
<dbReference type="DisGeNET" id="79977"/>
<dbReference type="GeneCards" id="GRHL2"/>
<dbReference type="GeneReviews" id="GRHL2"/>
<dbReference type="HGNC" id="HGNC:2799">
    <property type="gene designation" value="GRHL2"/>
</dbReference>
<dbReference type="HPA" id="ENSG00000083307">
    <property type="expression patterns" value="Tissue enhanced (skin)"/>
</dbReference>
<dbReference type="MalaCards" id="GRHL2"/>
<dbReference type="MIM" id="608576">
    <property type="type" value="gene"/>
</dbReference>
<dbReference type="MIM" id="608641">
    <property type="type" value="phenotype"/>
</dbReference>
<dbReference type="MIM" id="616029">
    <property type="type" value="phenotype"/>
</dbReference>
<dbReference type="MIM" id="618031">
    <property type="type" value="phenotype"/>
</dbReference>
<dbReference type="neXtProt" id="NX_Q6ISB3"/>
<dbReference type="OpenTargets" id="ENSG00000083307"/>
<dbReference type="Orphanet" id="423454">
    <property type="disease" value="Nail and teeth abnormalities-marginal palmoplantar keratoderma-oral hyperpigmentation syndrome"/>
</dbReference>
<dbReference type="Orphanet" id="98973">
    <property type="disease" value="Posterior polymorphous corneal dystrophy"/>
</dbReference>
<dbReference type="Orphanet" id="90635">
    <property type="disease" value="Rare autosomal dominant non-syndromic sensorineural deafness type DFNA"/>
</dbReference>
<dbReference type="PharmGKB" id="PA27270"/>
<dbReference type="VEuPathDB" id="HostDB:ENSG00000083307"/>
<dbReference type="eggNOG" id="KOG4091">
    <property type="taxonomic scope" value="Eukaryota"/>
</dbReference>
<dbReference type="GeneTree" id="ENSGT00940000155788"/>
<dbReference type="HOGENOM" id="CLU_021156_1_1_1"/>
<dbReference type="InParanoid" id="Q6ISB3"/>
<dbReference type="OMA" id="QAAQTQC"/>
<dbReference type="OrthoDB" id="7680836at2759"/>
<dbReference type="PAN-GO" id="Q6ISB3">
    <property type="GO annotations" value="6 GO annotations based on evolutionary models"/>
</dbReference>
<dbReference type="PhylomeDB" id="Q6ISB3"/>
<dbReference type="TreeFam" id="TF314132"/>
<dbReference type="PathwayCommons" id="Q6ISB3"/>
<dbReference type="SignaLink" id="Q6ISB3"/>
<dbReference type="SIGNOR" id="Q6ISB3"/>
<dbReference type="BioGRID-ORCS" id="79977">
    <property type="hits" value="85 hits in 1173 CRISPR screens"/>
</dbReference>
<dbReference type="ChiTaRS" id="GRHL2">
    <property type="organism name" value="human"/>
</dbReference>
<dbReference type="GenomeRNAi" id="79977"/>
<dbReference type="Pharos" id="Q6ISB3">
    <property type="development level" value="Tbio"/>
</dbReference>
<dbReference type="PRO" id="PR:Q6ISB3"/>
<dbReference type="Proteomes" id="UP000005640">
    <property type="component" value="Chromosome 8"/>
</dbReference>
<dbReference type="RNAct" id="Q6ISB3">
    <property type="molecule type" value="protein"/>
</dbReference>
<dbReference type="Bgee" id="ENSG00000083307">
    <property type="expression patterns" value="Expressed in buccal mucosa cell and 141 other cell types or tissues"/>
</dbReference>
<dbReference type="GO" id="GO:0005911">
    <property type="term" value="C:cell-cell junction"/>
    <property type="evidence" value="ECO:0000314"/>
    <property type="project" value="UniProtKB"/>
</dbReference>
<dbReference type="GO" id="GO:0000785">
    <property type="term" value="C:chromatin"/>
    <property type="evidence" value="ECO:0000247"/>
    <property type="project" value="NTNU_SB"/>
</dbReference>
<dbReference type="GO" id="GO:0016020">
    <property type="term" value="C:membrane"/>
    <property type="evidence" value="ECO:0007669"/>
    <property type="project" value="UniProtKB-SubCell"/>
</dbReference>
<dbReference type="GO" id="GO:0005654">
    <property type="term" value="C:nucleoplasm"/>
    <property type="evidence" value="ECO:0000314"/>
    <property type="project" value="HPA"/>
</dbReference>
<dbReference type="GO" id="GO:0005634">
    <property type="term" value="C:nucleus"/>
    <property type="evidence" value="ECO:0000314"/>
    <property type="project" value="UniProtKB"/>
</dbReference>
<dbReference type="GO" id="GO:0031490">
    <property type="term" value="F:chromatin DNA binding"/>
    <property type="evidence" value="ECO:0000314"/>
    <property type="project" value="UniProtKB"/>
</dbReference>
<dbReference type="GO" id="GO:0001216">
    <property type="term" value="F:DNA-binding transcription activator activity"/>
    <property type="evidence" value="ECO:0000314"/>
    <property type="project" value="UniProtKB"/>
</dbReference>
<dbReference type="GO" id="GO:0001228">
    <property type="term" value="F:DNA-binding transcription activator activity, RNA polymerase II-specific"/>
    <property type="evidence" value="ECO:0000314"/>
    <property type="project" value="HGNC"/>
</dbReference>
<dbReference type="GO" id="GO:0003700">
    <property type="term" value="F:DNA-binding transcription factor activity"/>
    <property type="evidence" value="ECO:0000314"/>
    <property type="project" value="GO_Central"/>
</dbReference>
<dbReference type="GO" id="GO:0000981">
    <property type="term" value="F:DNA-binding transcription factor activity, RNA polymerase II-specific"/>
    <property type="evidence" value="ECO:0000247"/>
    <property type="project" value="NTNU_SB"/>
</dbReference>
<dbReference type="GO" id="GO:0140297">
    <property type="term" value="F:DNA-binding transcription factor binding"/>
    <property type="evidence" value="ECO:0000353"/>
    <property type="project" value="UniProtKB"/>
</dbReference>
<dbReference type="GO" id="GO:0042802">
    <property type="term" value="F:identical protein binding"/>
    <property type="evidence" value="ECO:0000353"/>
    <property type="project" value="IntAct"/>
</dbReference>
<dbReference type="GO" id="GO:0001161">
    <property type="term" value="F:intronic transcription regulatory region sequence-specific DNA binding"/>
    <property type="evidence" value="ECO:0000250"/>
    <property type="project" value="UniProtKB"/>
</dbReference>
<dbReference type="GO" id="GO:0000978">
    <property type="term" value="F:RNA polymerase II cis-regulatory region sequence-specific DNA binding"/>
    <property type="evidence" value="ECO:0000318"/>
    <property type="project" value="GO_Central"/>
</dbReference>
<dbReference type="GO" id="GO:0043565">
    <property type="term" value="F:sequence-specific DNA binding"/>
    <property type="evidence" value="ECO:0000314"/>
    <property type="project" value="UniProtKB"/>
</dbReference>
<dbReference type="GO" id="GO:0061713">
    <property type="term" value="P:anterior neural tube closure"/>
    <property type="evidence" value="ECO:0007669"/>
    <property type="project" value="Ensembl"/>
</dbReference>
<dbReference type="GO" id="GO:0070830">
    <property type="term" value="P:bicellular tight junction assembly"/>
    <property type="evidence" value="ECO:0000315"/>
    <property type="project" value="UniProtKB"/>
</dbReference>
<dbReference type="GO" id="GO:0007420">
    <property type="term" value="P:brain development"/>
    <property type="evidence" value="ECO:0000318"/>
    <property type="project" value="GO_Central"/>
</dbReference>
<dbReference type="GO" id="GO:0043010">
    <property type="term" value="P:camera-type eye development"/>
    <property type="evidence" value="ECO:0007669"/>
    <property type="project" value="Ensembl"/>
</dbReference>
<dbReference type="GO" id="GO:0003208">
    <property type="term" value="P:cardiac ventricle morphogenesis"/>
    <property type="evidence" value="ECO:0007669"/>
    <property type="project" value="Ensembl"/>
</dbReference>
<dbReference type="GO" id="GO:0007155">
    <property type="term" value="P:cell adhesion"/>
    <property type="evidence" value="ECO:0000315"/>
    <property type="project" value="UniProtKB"/>
</dbReference>
<dbReference type="GO" id="GO:0034329">
    <property type="term" value="P:cell junction assembly"/>
    <property type="evidence" value="ECO:0000315"/>
    <property type="project" value="UniProtKB"/>
</dbReference>
<dbReference type="GO" id="GO:0048701">
    <property type="term" value="P:embryonic cranial skeleton morphogenesis"/>
    <property type="evidence" value="ECO:0007669"/>
    <property type="project" value="Ensembl"/>
</dbReference>
<dbReference type="GO" id="GO:0042733">
    <property type="term" value="P:embryonic digit morphogenesis"/>
    <property type="evidence" value="ECO:0007669"/>
    <property type="project" value="Ensembl"/>
</dbReference>
<dbReference type="GO" id="GO:0003382">
    <property type="term" value="P:epithelial cell morphogenesis"/>
    <property type="evidence" value="ECO:0000315"/>
    <property type="project" value="UniProtKB"/>
</dbReference>
<dbReference type="GO" id="GO:0060672">
    <property type="term" value="P:epithelial cell morphogenesis involved in placental branching"/>
    <property type="evidence" value="ECO:0007669"/>
    <property type="project" value="Ensembl"/>
</dbReference>
<dbReference type="GO" id="GO:0090132">
    <property type="term" value="P:epithelium migration"/>
    <property type="evidence" value="ECO:0000250"/>
    <property type="project" value="UniProtKB"/>
</dbReference>
<dbReference type="GO" id="GO:0060324">
    <property type="term" value="P:face development"/>
    <property type="evidence" value="ECO:0007669"/>
    <property type="project" value="Ensembl"/>
</dbReference>
<dbReference type="GO" id="GO:0030216">
    <property type="term" value="P:keratinocyte differentiation"/>
    <property type="evidence" value="ECO:0000314"/>
    <property type="project" value="UniProtKB"/>
</dbReference>
<dbReference type="GO" id="GO:0060487">
    <property type="term" value="P:lung epithelial cell differentiation"/>
    <property type="evidence" value="ECO:0000250"/>
    <property type="project" value="UniProtKB"/>
</dbReference>
<dbReference type="GO" id="GO:0060463">
    <property type="term" value="P:lung lobe morphogenesis"/>
    <property type="evidence" value="ECO:0007669"/>
    <property type="project" value="Ensembl"/>
</dbReference>
<dbReference type="GO" id="GO:0035264">
    <property type="term" value="P:multicellular organism growth"/>
    <property type="evidence" value="ECO:0007669"/>
    <property type="project" value="Ensembl"/>
</dbReference>
<dbReference type="GO" id="GO:0001843">
    <property type="term" value="P:neural tube closure"/>
    <property type="evidence" value="ECO:0000250"/>
    <property type="project" value="UniProtKB"/>
</dbReference>
<dbReference type="GO" id="GO:0021915">
    <property type="term" value="P:neural tube development"/>
    <property type="evidence" value="ECO:0000318"/>
    <property type="project" value="GO_Central"/>
</dbReference>
<dbReference type="GO" id="GO:0045944">
    <property type="term" value="P:positive regulation of transcription by RNA polymerase II"/>
    <property type="evidence" value="ECO:0000314"/>
    <property type="project" value="HGNC"/>
</dbReference>
<dbReference type="GO" id="GO:0006357">
    <property type="term" value="P:regulation of transcription by RNA polymerase II"/>
    <property type="evidence" value="ECO:0000314"/>
    <property type="project" value="UniProtKB"/>
</dbReference>
<dbReference type="InterPro" id="IPR007604">
    <property type="entry name" value="CP2"/>
</dbReference>
<dbReference type="InterPro" id="IPR040167">
    <property type="entry name" value="TF_CP2-like"/>
</dbReference>
<dbReference type="PANTHER" id="PTHR11037:SF17">
    <property type="entry name" value="GRAINYHEAD-LIKE PROTEIN 2 HOMOLOG"/>
    <property type="match status" value="1"/>
</dbReference>
<dbReference type="PANTHER" id="PTHR11037">
    <property type="entry name" value="TRANSCRIPTION FACTOR CP2"/>
    <property type="match status" value="1"/>
</dbReference>
<dbReference type="Pfam" id="PF04516">
    <property type="entry name" value="CP2"/>
    <property type="match status" value="1"/>
</dbReference>
<dbReference type="Pfam" id="PF25416">
    <property type="entry name" value="GRHL1_C"/>
    <property type="match status" value="1"/>
</dbReference>
<dbReference type="PROSITE" id="PS51968">
    <property type="entry name" value="GRH_CP2_DB"/>
    <property type="match status" value="1"/>
</dbReference>